<dbReference type="EMBL" id="M97916">
    <property type="protein sequence ID" value="AAC41571.1"/>
    <property type="molecule type" value="mRNA"/>
</dbReference>
<dbReference type="SMR" id="Q27017"/>
<dbReference type="GO" id="GO:0005615">
    <property type="term" value="C:extracellular space"/>
    <property type="evidence" value="ECO:0007669"/>
    <property type="project" value="TreeGrafter"/>
</dbReference>
<dbReference type="GO" id="GO:0005549">
    <property type="term" value="F:odorant binding"/>
    <property type="evidence" value="ECO:0007669"/>
    <property type="project" value="InterPro"/>
</dbReference>
<dbReference type="GO" id="GO:0007608">
    <property type="term" value="P:sensory perception of smell"/>
    <property type="evidence" value="ECO:0007669"/>
    <property type="project" value="TreeGrafter"/>
</dbReference>
<dbReference type="CDD" id="cd23992">
    <property type="entry name" value="PBP_GOBP"/>
    <property type="match status" value="1"/>
</dbReference>
<dbReference type="FunFam" id="1.10.238.20:FF:000001">
    <property type="entry name" value="General odorant-binding protein lush"/>
    <property type="match status" value="1"/>
</dbReference>
<dbReference type="Gene3D" id="1.10.238.20">
    <property type="entry name" value="Pheromone/general odorant binding protein domain"/>
    <property type="match status" value="1"/>
</dbReference>
<dbReference type="InterPro" id="IPR006170">
    <property type="entry name" value="PBP/GOBP"/>
</dbReference>
<dbReference type="InterPro" id="IPR036728">
    <property type="entry name" value="PBP_GOBP_sf"/>
</dbReference>
<dbReference type="PANTHER" id="PTHR11857:SF43">
    <property type="entry name" value="GEO07291P1-RELATED"/>
    <property type="match status" value="1"/>
</dbReference>
<dbReference type="PANTHER" id="PTHR11857">
    <property type="entry name" value="ODORANT BINDING PROTEIN-RELATED"/>
    <property type="match status" value="1"/>
</dbReference>
<dbReference type="Pfam" id="PF01395">
    <property type="entry name" value="PBP_GOBP"/>
    <property type="match status" value="1"/>
</dbReference>
<dbReference type="SMART" id="SM00708">
    <property type="entry name" value="PhBP"/>
    <property type="match status" value="1"/>
</dbReference>
<dbReference type="SUPFAM" id="SSF47565">
    <property type="entry name" value="Insect pheromone/odorant-binding proteins"/>
    <property type="match status" value="1"/>
</dbReference>
<name>B1_TENMO</name>
<reference key="1">
    <citation type="journal article" date="1995" name="Insect Biochem. Mol. Biol.">
        <title>The B proteins secreted by the tubular accessory sex glands of the male mealworm beetle, Tenebrio molitor, have sequence similarity to moth pheromone-binding proteins.</title>
        <authorList>
            <person name="Paesen G.C."/>
            <person name="Happ G.M."/>
        </authorList>
    </citation>
    <scope>NUCLEOTIDE SEQUENCE [MRNA]</scope>
    <source>
        <tissue>Tubular accessory gland</tissue>
    </source>
</reference>
<organism>
    <name type="scientific">Tenebrio molitor</name>
    <name type="common">Yellow mealworm beetle</name>
    <dbReference type="NCBI Taxonomy" id="7067"/>
    <lineage>
        <taxon>Eukaryota</taxon>
        <taxon>Metazoa</taxon>
        <taxon>Ecdysozoa</taxon>
        <taxon>Arthropoda</taxon>
        <taxon>Hexapoda</taxon>
        <taxon>Insecta</taxon>
        <taxon>Pterygota</taxon>
        <taxon>Neoptera</taxon>
        <taxon>Endopterygota</taxon>
        <taxon>Coleoptera</taxon>
        <taxon>Polyphaga</taxon>
        <taxon>Cucujiformia</taxon>
        <taxon>Tenebrionidae</taxon>
        <taxon>Tenebrio</taxon>
    </lineage>
</organism>
<accession>Q27017</accession>
<proteinExistence type="evidence at transcript level"/>
<comment type="function">
    <text>May be a carrier protein for lipids.</text>
</comment>
<comment type="subcellular location">
    <subcellularLocation>
        <location evidence="3">Secreted</location>
    </subcellularLocation>
</comment>
<comment type="tissue specificity">
    <text>Tubular accessory sex gland.</text>
</comment>
<comment type="PTM">
    <text>N-glycosylated.</text>
</comment>
<comment type="similarity">
    <text evidence="3">Belongs to the PBP/GOBP family.</text>
</comment>
<sequence length="130" mass="14587">LTSLILLVAVQAITEEDLELLRQTSAECKTESGVSEDVIKRARKGDLEDDPKLKMQLLCIFKALEIVAESGEIEADTFKEKLTRVTNDDEESEKIVEKCTVTEDTPEDTAFEVTKCVLKDKPNFFGDLFV</sequence>
<feature type="signal peptide" evidence="2">
    <location>
        <begin position="1" status="less than"/>
        <end position="12"/>
    </location>
</feature>
<feature type="chain" id="PRO_0000012592" description="B1 protein">
    <location>
        <begin position="13"/>
        <end position="130"/>
    </location>
</feature>
<feature type="disulfide bond" evidence="1">
    <location>
        <begin position="28"/>
        <end position="59"/>
    </location>
</feature>
<feature type="disulfide bond" evidence="1">
    <location>
        <begin position="99"/>
        <end position="116"/>
    </location>
</feature>
<feature type="non-terminal residue">
    <location>
        <position position="1"/>
    </location>
</feature>
<protein>
    <recommendedName>
        <fullName>B1 protein</fullName>
    </recommendedName>
</protein>
<evidence type="ECO:0000250" key="1"/>
<evidence type="ECO:0000255" key="2"/>
<evidence type="ECO:0000305" key="3"/>
<keyword id="KW-1015">Disulfide bond</keyword>
<keyword id="KW-0325">Glycoprotein</keyword>
<keyword id="KW-0964">Secreted</keyword>
<keyword id="KW-0732">Signal</keyword>